<organism>
    <name type="scientific">Cairina moschata</name>
    <name type="common">Muscovy duck</name>
    <dbReference type="NCBI Taxonomy" id="8855"/>
    <lineage>
        <taxon>Eukaryota</taxon>
        <taxon>Metazoa</taxon>
        <taxon>Chordata</taxon>
        <taxon>Craniata</taxon>
        <taxon>Vertebrata</taxon>
        <taxon>Euteleostomi</taxon>
        <taxon>Archelosauria</taxon>
        <taxon>Archosauria</taxon>
        <taxon>Dinosauria</taxon>
        <taxon>Saurischia</taxon>
        <taxon>Theropoda</taxon>
        <taxon>Coelurosauria</taxon>
        <taxon>Aves</taxon>
        <taxon>Neognathae</taxon>
        <taxon>Galloanserae</taxon>
        <taxon>Anseriformes</taxon>
        <taxon>Anatidae</taxon>
        <taxon>Anatinae</taxon>
        <taxon>Cairina</taxon>
    </lineage>
</organism>
<feature type="initiator methionine" description="Removed" evidence="1">
    <location>
        <position position="1"/>
    </location>
</feature>
<feature type="chain" id="PRO_0000158291" description="Histone H4">
    <location>
        <begin position="2"/>
        <end position="103"/>
    </location>
</feature>
<feature type="DNA-binding region">
    <location>
        <begin position="17"/>
        <end position="21"/>
    </location>
</feature>
<feature type="region of interest" description="Disordered" evidence="4">
    <location>
        <begin position="1"/>
        <end position="20"/>
    </location>
</feature>
<feature type="compositionally biased region" description="Gly residues" evidence="4">
    <location>
        <begin position="1"/>
        <end position="14"/>
    </location>
</feature>
<feature type="modified residue" description="N-acetylserine" evidence="2">
    <location>
        <position position="2"/>
    </location>
</feature>
<feature type="modified residue" description="Phosphoserine" evidence="2">
    <location>
        <position position="2"/>
    </location>
</feature>
<feature type="modified residue" description="Asymmetric dimethylarginine; by PRMT1; alternate" evidence="2">
    <location>
        <position position="4"/>
    </location>
</feature>
<feature type="modified residue" description="Citrulline; alternate" evidence="2">
    <location>
        <position position="4"/>
    </location>
</feature>
<feature type="modified residue" description="Omega-N-methylarginine; by PRMT1; alternate" evidence="2">
    <location>
        <position position="4"/>
    </location>
</feature>
<feature type="modified residue" description="Symmetric dimethylarginine; by PRMT5 and PRMT7; alternate" evidence="2">
    <location>
        <position position="4"/>
    </location>
</feature>
<feature type="modified residue" description="N6-(2-hydroxyisobutyryl)lysine; alternate" evidence="2">
    <location>
        <position position="6"/>
    </location>
</feature>
<feature type="modified residue" description="N6-acetyl-N6-methyllysine; alternate" evidence="2">
    <location>
        <position position="6"/>
    </location>
</feature>
<feature type="modified residue" description="N6-acetyllysine" evidence="2">
    <location>
        <position position="6"/>
    </location>
</feature>
<feature type="modified residue" description="N6-butyryllysine; alternate" evidence="2">
    <location>
        <position position="6"/>
    </location>
</feature>
<feature type="modified residue" description="N6-glutaryllysine; alternate" evidence="2">
    <location>
        <position position="6"/>
    </location>
</feature>
<feature type="modified residue" description="N6-lactoyllysine; alternate" evidence="2">
    <location>
        <position position="6"/>
    </location>
</feature>
<feature type="modified residue" description="N6-(2-hydroxyisobutyryl)lysine; alternate" evidence="2">
    <location>
        <position position="9"/>
    </location>
</feature>
<feature type="modified residue" description="N6-acetyllysine" evidence="2">
    <location>
        <position position="9"/>
    </location>
</feature>
<feature type="modified residue" description="N6-butyryllysine; alternate" evidence="2">
    <location>
        <position position="9"/>
    </location>
</feature>
<feature type="modified residue" description="N6-lactoyllysine; alternate" evidence="2">
    <location>
        <position position="9"/>
    </location>
</feature>
<feature type="modified residue" description="N6-propionyllysine; alternate" evidence="2">
    <location>
        <position position="9"/>
    </location>
</feature>
<feature type="modified residue" description="N6-(2-hydroxyisobutyryl)lysine; alternate" evidence="2">
    <location>
        <position position="13"/>
    </location>
</feature>
<feature type="modified residue" description="N6-acetyl-N6-methyllysine; alternate" evidence="2">
    <location>
        <position position="13"/>
    </location>
</feature>
<feature type="modified residue" description="N6-acetyllysine" evidence="2">
    <location>
        <position position="13"/>
    </location>
</feature>
<feature type="modified residue" description="N6-butyryllysine; alternate" evidence="2">
    <location>
        <position position="13"/>
    </location>
</feature>
<feature type="modified residue" description="N6-glutaryllysine; alternate" evidence="2">
    <location>
        <position position="13"/>
    </location>
</feature>
<feature type="modified residue" description="N6-lactoyllysine; alternate" evidence="2">
    <location>
        <position position="13"/>
    </location>
</feature>
<feature type="modified residue" description="N6-methyllysine; alternate" evidence="2">
    <location>
        <position position="13"/>
    </location>
</feature>
<feature type="modified residue" description="N6-(2-hydroxyisobutyryl)lysine; alternate" evidence="2">
    <location>
        <position position="17"/>
    </location>
</feature>
<feature type="modified residue" description="N6-acetyllysine" evidence="2">
    <location>
        <position position="17"/>
    </location>
</feature>
<feature type="modified residue" description="N6-butyryllysine; alternate" evidence="2">
    <location>
        <position position="17"/>
    </location>
</feature>
<feature type="modified residue" description="N6-lactoyllysine; alternate" evidence="2">
    <location>
        <position position="17"/>
    </location>
</feature>
<feature type="modified residue" description="N6-propionyllysine; alternate" evidence="2">
    <location>
        <position position="17"/>
    </location>
</feature>
<feature type="modified residue" description="N6,N6,N6-trimethyllysine; alternate" evidence="2">
    <location>
        <position position="21"/>
    </location>
</feature>
<feature type="modified residue" description="N6,N6-dimethyllysine; alternate" evidence="2">
    <location>
        <position position="21"/>
    </location>
</feature>
<feature type="modified residue" description="N6-methylated lysine" evidence="2">
    <location>
        <position position="21"/>
    </location>
</feature>
<feature type="modified residue" description="N6-methyllysine; alternate" evidence="2">
    <location>
        <position position="21"/>
    </location>
</feature>
<feature type="modified residue" description="N6-(2-hydroxyisobutyryl)lysine; alternate" evidence="2">
    <location>
        <position position="32"/>
    </location>
</feature>
<feature type="modified residue" description="N6-acetyllysine" evidence="2">
    <location>
        <position position="32"/>
    </location>
</feature>
<feature type="modified residue" description="N6-butyryllysine; alternate" evidence="2">
    <location>
        <position position="32"/>
    </location>
</feature>
<feature type="modified residue" description="N6-glutaryllysine; alternate" evidence="2">
    <location>
        <position position="32"/>
    </location>
</feature>
<feature type="modified residue" description="N6-lactoyllysine; alternate" evidence="2">
    <location>
        <position position="32"/>
    </location>
</feature>
<feature type="modified residue" description="N6-propionyllysine; alternate" evidence="2">
    <location>
        <position position="32"/>
    </location>
</feature>
<feature type="modified residue" description="N6-succinyllysine; alternate" evidence="2">
    <location>
        <position position="32"/>
    </location>
</feature>
<feature type="modified residue" description="N6-(2-hydroxyisobutyryl)lysine; alternate" evidence="2">
    <location>
        <position position="45"/>
    </location>
</feature>
<feature type="modified residue" description="N6-butyryllysine; alternate" evidence="2">
    <location>
        <position position="45"/>
    </location>
</feature>
<feature type="modified residue" description="N6-propionyllysine; alternate" evidence="2">
    <location>
        <position position="45"/>
    </location>
</feature>
<feature type="modified residue" description="Phosphoserine; by PAK2" evidence="2">
    <location>
        <position position="48"/>
    </location>
</feature>
<feature type="modified residue" description="Phosphotyrosine" evidence="2">
    <location>
        <position position="52"/>
    </location>
</feature>
<feature type="modified residue" description="N6-(2-hydroxyisobutyryl)lysine" evidence="2">
    <location>
        <position position="60"/>
    </location>
</feature>
<feature type="modified residue" description="N6-acetyllysine" evidence="2">
    <location>
        <position position="60"/>
    </location>
</feature>
<feature type="modified residue" description="N6-glutaryllysine; alternate" evidence="2">
    <location>
        <position position="60"/>
    </location>
</feature>
<feature type="modified residue" description="N6-(2-hydroxyisobutyryl)lysine; alternate" evidence="2">
    <location>
        <position position="78"/>
    </location>
</feature>
<feature type="modified residue" description="N6-butyryllysine; alternate" evidence="2">
    <location>
        <position position="78"/>
    </location>
</feature>
<feature type="modified residue" description="N6-glutaryllysine; alternate" evidence="2">
    <location>
        <position position="78"/>
    </location>
</feature>
<feature type="modified residue" description="N6-lactoyllysine; alternate" evidence="2">
    <location>
        <position position="78"/>
    </location>
</feature>
<feature type="modified residue" description="N6-propionyllysine; alternate" evidence="2">
    <location>
        <position position="78"/>
    </location>
</feature>
<feature type="modified residue" description="N6-succinyllysine" evidence="2">
    <location>
        <position position="78"/>
    </location>
</feature>
<feature type="modified residue" description="N6-(2-hydroxyisobutyryl)lysine; alternate" evidence="2">
    <location>
        <position position="80"/>
    </location>
</feature>
<feature type="modified residue" description="N6-acetyllysine" evidence="2">
    <location>
        <position position="80"/>
    </location>
</feature>
<feature type="modified residue" description="N6-butyryllysine; alternate" evidence="2">
    <location>
        <position position="80"/>
    </location>
</feature>
<feature type="modified residue" description="N6-glutaryllysine; alternate" evidence="2">
    <location>
        <position position="80"/>
    </location>
</feature>
<feature type="modified residue" description="N6-propionyllysine; alternate" evidence="2">
    <location>
        <position position="80"/>
    </location>
</feature>
<feature type="modified residue" description="Phosphotyrosine" evidence="2">
    <location>
        <position position="89"/>
    </location>
</feature>
<feature type="modified residue" description="N6-(2-hydroxyisobutyryl)lysine; alternate" evidence="2">
    <location>
        <position position="92"/>
    </location>
</feature>
<feature type="modified residue" description="N6-acetyllysine; alternate" evidence="2">
    <location>
        <position position="92"/>
    </location>
</feature>
<feature type="modified residue" description="N6-butyryllysine; alternate" evidence="2">
    <location>
        <position position="92"/>
    </location>
</feature>
<feature type="modified residue" description="N6-glutaryllysine; alternate" evidence="2">
    <location>
        <position position="92"/>
    </location>
</feature>
<feature type="modified residue" description="N6-lactoyllysine; alternate" evidence="2">
    <location>
        <position position="92"/>
    </location>
</feature>
<feature type="modified residue" description="N6-propionyllysine; alternate" evidence="2">
    <location>
        <position position="92"/>
    </location>
</feature>
<feature type="modified residue" description="N6-succinyllysine; alternate" evidence="2">
    <location>
        <position position="92"/>
    </location>
</feature>
<feature type="cross-link" description="Glycyl lysine isopeptide (Lys-Gly) (interchain with G-Cter in UFM1); alternate" evidence="2">
    <location>
        <position position="32"/>
    </location>
</feature>
<feature type="cross-link" description="Glycyl lysine isopeptide (Lys-Gly) (interchain with G-Cter in ubiquitin); alternate" evidence="2">
    <location>
        <position position="92"/>
    </location>
</feature>
<dbReference type="EMBL" id="X14732">
    <property type="protein sequence ID" value="CAA32854.1"/>
    <property type="molecule type" value="Genomic_DNA"/>
</dbReference>
<dbReference type="EMBL" id="X14732">
    <property type="protein sequence ID" value="CAA32857.1"/>
    <property type="molecule type" value="Genomic_DNA"/>
</dbReference>
<dbReference type="PIR" id="I50459">
    <property type="entry name" value="I50459"/>
</dbReference>
<dbReference type="SMR" id="P62800"/>
<dbReference type="Ensembl" id="ENSCMMT00000003047.1">
    <property type="protein sequence ID" value="ENSCMMP00000002716.1"/>
    <property type="gene ID" value="ENSCMMG00000001774.1"/>
</dbReference>
<dbReference type="Ensembl" id="ENSCMMT00000003065.1">
    <property type="protein sequence ID" value="ENSCMMP00000002732.1"/>
    <property type="gene ID" value="ENSCMMG00000001783.1"/>
</dbReference>
<dbReference type="Ensembl" id="ENSCMMT00000003106.1">
    <property type="protein sequence ID" value="ENSCMMP00000002772.1"/>
    <property type="gene ID" value="ENSCMMG00000001815.1"/>
</dbReference>
<dbReference type="Ensembl" id="ENSCMMT00000003116.1">
    <property type="protein sequence ID" value="ENSCMMP00000002782.1"/>
    <property type="gene ID" value="ENSCMMG00000001824.1"/>
</dbReference>
<dbReference type="Ensembl" id="ENSCMMT00000003181.1">
    <property type="protein sequence ID" value="ENSCMMP00000002844.1"/>
    <property type="gene ID" value="ENSCMMG00000001858.1"/>
</dbReference>
<dbReference type="Proteomes" id="UP000694556">
    <property type="component" value="Chromosome 1"/>
</dbReference>
<dbReference type="GO" id="GO:0000786">
    <property type="term" value="C:nucleosome"/>
    <property type="evidence" value="ECO:0007669"/>
    <property type="project" value="UniProtKB-KW"/>
</dbReference>
<dbReference type="GO" id="GO:0005634">
    <property type="term" value="C:nucleus"/>
    <property type="evidence" value="ECO:0007669"/>
    <property type="project" value="UniProtKB-SubCell"/>
</dbReference>
<dbReference type="GO" id="GO:0003677">
    <property type="term" value="F:DNA binding"/>
    <property type="evidence" value="ECO:0007669"/>
    <property type="project" value="UniProtKB-KW"/>
</dbReference>
<dbReference type="GO" id="GO:0046982">
    <property type="term" value="F:protein heterodimerization activity"/>
    <property type="evidence" value="ECO:0007669"/>
    <property type="project" value="InterPro"/>
</dbReference>
<dbReference type="GO" id="GO:0030527">
    <property type="term" value="F:structural constituent of chromatin"/>
    <property type="evidence" value="ECO:0007669"/>
    <property type="project" value="InterPro"/>
</dbReference>
<dbReference type="CDD" id="cd22912">
    <property type="entry name" value="HFD_H4"/>
    <property type="match status" value="1"/>
</dbReference>
<dbReference type="FunFam" id="1.10.20.10:FF:000002">
    <property type="entry name" value="Histone H4"/>
    <property type="match status" value="1"/>
</dbReference>
<dbReference type="Gene3D" id="1.10.20.10">
    <property type="entry name" value="Histone, subunit A"/>
    <property type="match status" value="1"/>
</dbReference>
<dbReference type="InterPro" id="IPR035425">
    <property type="entry name" value="CENP-T/H4_C"/>
</dbReference>
<dbReference type="InterPro" id="IPR009072">
    <property type="entry name" value="Histone-fold"/>
</dbReference>
<dbReference type="InterPro" id="IPR001951">
    <property type="entry name" value="Histone_H4"/>
</dbReference>
<dbReference type="InterPro" id="IPR019809">
    <property type="entry name" value="Histone_H4_CS"/>
</dbReference>
<dbReference type="InterPro" id="IPR004823">
    <property type="entry name" value="TAF_TATA-bd_Histone-like_dom"/>
</dbReference>
<dbReference type="PANTHER" id="PTHR10484">
    <property type="entry name" value="HISTONE H4"/>
    <property type="match status" value="1"/>
</dbReference>
<dbReference type="Pfam" id="PF15511">
    <property type="entry name" value="CENP-T_C"/>
    <property type="match status" value="1"/>
</dbReference>
<dbReference type="PRINTS" id="PR00623">
    <property type="entry name" value="HISTONEH4"/>
</dbReference>
<dbReference type="SMART" id="SM00417">
    <property type="entry name" value="H4"/>
    <property type="match status" value="1"/>
</dbReference>
<dbReference type="SMART" id="SM00803">
    <property type="entry name" value="TAF"/>
    <property type="match status" value="1"/>
</dbReference>
<dbReference type="SUPFAM" id="SSF47113">
    <property type="entry name" value="Histone-fold"/>
    <property type="match status" value="1"/>
</dbReference>
<dbReference type="PROSITE" id="PS00047">
    <property type="entry name" value="HISTONE_H4"/>
    <property type="match status" value="1"/>
</dbReference>
<evidence type="ECO:0000250" key="1"/>
<evidence type="ECO:0000250" key="2">
    <source>
        <dbReference type="UniProtKB" id="P62805"/>
    </source>
</evidence>
<evidence type="ECO:0000250" key="3">
    <source>
        <dbReference type="UniProtKB" id="P62806"/>
    </source>
</evidence>
<evidence type="ECO:0000256" key="4">
    <source>
        <dbReference type="SAM" id="MobiDB-lite"/>
    </source>
</evidence>
<evidence type="ECO:0000305" key="5"/>
<protein>
    <recommendedName>
        <fullName>Histone H4</fullName>
    </recommendedName>
</protein>
<proteinExistence type="inferred from homology"/>
<keyword id="KW-0007">Acetylation</keyword>
<keyword id="KW-0158">Chromosome</keyword>
<keyword id="KW-0164">Citrullination</keyword>
<keyword id="KW-0238">DNA-binding</keyword>
<keyword id="KW-0379">Hydroxylation</keyword>
<keyword id="KW-1017">Isopeptide bond</keyword>
<keyword id="KW-0488">Methylation</keyword>
<keyword id="KW-0544">Nucleosome core</keyword>
<keyword id="KW-0539">Nucleus</keyword>
<keyword id="KW-0597">Phosphoprotein</keyword>
<keyword id="KW-1185">Reference proteome</keyword>
<keyword id="KW-0832">Ubl conjugation</keyword>
<name>H4_CAIMO</name>
<comment type="function">
    <text>Core component of nucleosome. Nucleosomes wrap and compact DNA into chromatin, limiting DNA accessibility to the cellular machineries which require DNA as a template. Histones thereby play a central role in transcription regulation, DNA repair, DNA replication and chromosomal stability. DNA accessibility is regulated via a complex set of post-translational modifications of histones, also called histone code, and nucleosome remodeling.</text>
</comment>
<comment type="subunit">
    <text>The nucleosome is a histone octamer containing two molecules each of H2A, H2B, H3 and H4 assembled in one H3-H4 heterotetramer and two H2A-H2B heterodimers. The octamer wraps approximately 147 bp of DNA.</text>
</comment>
<comment type="subcellular location">
    <subcellularLocation>
        <location evidence="1">Nucleus</location>
    </subcellularLocation>
    <subcellularLocation>
        <location evidence="1">Chromosome</location>
    </subcellularLocation>
</comment>
<comment type="PTM">
    <text evidence="2">Acetylation at Lys-6 (H4K5ac), Lys-9 (H4K8ac), Lys-13 (H4K12ac) and Lys-17 (H4K16ac) occurs in coding regions of the genome but not in heterochromatin.</text>
</comment>
<comment type="PTM">
    <text evidence="2">Citrullination at Arg-4 (H4R3ci) by PADI4 impairs methylation.</text>
</comment>
<comment type="PTM">
    <text evidence="2">Monomethylation and asymmetric dimethylation at Arg-4 (H4R3me1 and H4R3me2a, respectively) by PRMT1 favors acetylation at Lys-9 (H4K8ac) and Lys-13 (H4K12ac). Demethylation is performed by JMJD6. Symmetric dimethylation on Arg-4 (H4R3me2s) by the PRDM1/PRMT5 complex may play a crucial role in the germ-cell lineage (By similarity).</text>
</comment>
<comment type="PTM">
    <text evidence="2">Monomethylated, dimethylated or trimethylated at Lys-21 (H4K20me1, H4K20me2, H4K20me3). Monomethylation is performed by KMT5A/SET8. Trimethylation is performed by KMT5B and KMT5C and induces gene silencing. Monomethylated at Lys-13 (H4K12me1) by N6AMT1; H4K12me1 modification is present at the promoters of numerous genes encoding cell cycle regulators.</text>
</comment>
<comment type="PTM">
    <text evidence="2">Acetyl-methylated at Lys-6 and Lys-13 (H4K5acme and H4K12acme, respectively), acetyl-methylation is an epigenetic mark of active chromatin associated with increased transcriptional initiation. Acetyl-methylation is formed by acetylation by EP300/p300 of lysine residues that are already monomethylated on the same side chain. H4K5acme and H4K12acme marks specifically bind BRD2.</text>
</comment>
<comment type="PTM">
    <text evidence="2">Phosphorylated by PAK2 at Ser-48 (H4S47ph). This phosphorylation increases the association of H3.3-H4 with the histone chaperone HIRA, thus promoting nucleosome assembly of H3.3-H4 and inhibiting nucleosome assembly of H3.1-H4 (By similarity).</text>
</comment>
<comment type="PTM">
    <text evidence="2">Ubiquitinated by the CUL4-DDB-RBX1 complex in response to ultraviolet irradiation. This may weaken the interaction between histones and DNA and facilitate DNA accessibility to repair proteins. Monoubiquitinated at Lys-92 of histone H4 (H4K91ub1) in response to DNA damage. The exact role of H4K91ub1 in DNA damage response is still unclear but it may function as a licensing signal for additional histone H4 post-translational modifications such as H4 Lys-21 methylation (H4K20me) (By similarity).</text>
</comment>
<comment type="PTM">
    <text evidence="2">Sumoylated, which is associated with transcriptional repression.</text>
</comment>
<comment type="PTM">
    <text evidence="3">Butyrylation of histones marks active promoters and competes with histone acetylation.</text>
</comment>
<comment type="PTM">
    <text evidence="2">Glutarylation at Lys-92 (H4K91glu) destabilizes nucleosomes by promoting dissociation of the H2A-H2B dimers from nucleosomes.</text>
</comment>
<comment type="PTM">
    <text evidence="2">Ufmylated; monofmylated by UFL1 at Lys-32 (H4K31Ufm1) in response to DNA damage.</text>
</comment>
<comment type="PTM">
    <text evidence="2">Lactylated in macrophages by EP300/P300 by using lactoyl-CoA directly derived from endogenous or exogenous lactate, leading to stimulates gene transcription. Delactylated by SIRT3 at Lys-17 (H4K16la).</text>
</comment>
<comment type="similarity">
    <text evidence="5">Belongs to the histone H4 family.</text>
</comment>
<sequence length="103" mass="11367">MSGRGKGGKGLGKGGAKRHRKVLRDNIQGITKPAIRRLARRGGVKRISGLIYEETRGVLKVFLENVIRDAVTYTEHAKRKTVTAMDVVYALKRQGRTLYGFGG</sequence>
<reference key="1">
    <citation type="journal article" date="1989" name="J. Mol. Evol.">
        <title>Conserved organization of an avian histone gene cluster with inverted duplications of H3 and H4 genes.</title>
        <authorList>
            <person name="Toenjes R."/>
            <person name="Munk K."/>
            <person name="Doenecke D."/>
        </authorList>
    </citation>
    <scope>NUCLEOTIDE SEQUENCE [GENOMIC DNA]</scope>
</reference>
<accession>P62800</accession>
<accession>P02304</accession>
<accession>P02305</accession>